<keyword id="KW-0012">Acyltransferase</keyword>
<keyword id="KW-0963">Cytoplasm</keyword>
<keyword id="KW-1185">Reference proteome</keyword>
<keyword id="KW-0808">Transferase</keyword>
<proteinExistence type="inferred from homology"/>
<protein>
    <recommendedName>
        <fullName evidence="1">Octanoyltransferase</fullName>
        <ecNumber evidence="1">2.3.1.181</ecNumber>
    </recommendedName>
    <alternativeName>
        <fullName evidence="1">Lipoate-protein ligase B</fullName>
    </alternativeName>
    <alternativeName>
        <fullName evidence="1">Lipoyl/octanoyl transferase</fullName>
    </alternativeName>
    <alternativeName>
        <fullName evidence="1">Octanoyl-[acyl-carrier-protein]-protein N-octanoyltransferase</fullName>
    </alternativeName>
</protein>
<gene>
    <name evidence="1" type="primary">lipB</name>
    <name type="ordered locus">ACP_2861</name>
</gene>
<comment type="function">
    <text evidence="1">Catalyzes the transfer of endogenously produced octanoic acid from octanoyl-acyl-carrier-protein onto the lipoyl domains of lipoate-dependent enzymes. Lipoyl-ACP can also act as a substrate although octanoyl-ACP is likely to be the physiological substrate.</text>
</comment>
<comment type="catalytic activity">
    <reaction evidence="1">
        <text>octanoyl-[ACP] + L-lysyl-[protein] = N(6)-octanoyl-L-lysyl-[protein] + holo-[ACP] + H(+)</text>
        <dbReference type="Rhea" id="RHEA:17665"/>
        <dbReference type="Rhea" id="RHEA-COMP:9636"/>
        <dbReference type="Rhea" id="RHEA-COMP:9685"/>
        <dbReference type="Rhea" id="RHEA-COMP:9752"/>
        <dbReference type="Rhea" id="RHEA-COMP:9928"/>
        <dbReference type="ChEBI" id="CHEBI:15378"/>
        <dbReference type="ChEBI" id="CHEBI:29969"/>
        <dbReference type="ChEBI" id="CHEBI:64479"/>
        <dbReference type="ChEBI" id="CHEBI:78463"/>
        <dbReference type="ChEBI" id="CHEBI:78809"/>
        <dbReference type="EC" id="2.3.1.181"/>
    </reaction>
</comment>
<comment type="pathway">
    <text evidence="1">Protein modification; protein lipoylation via endogenous pathway; protein N(6)-(lipoyl)lysine from octanoyl-[acyl-carrier-protein]: step 1/2.</text>
</comment>
<comment type="subcellular location">
    <subcellularLocation>
        <location evidence="1">Cytoplasm</location>
    </subcellularLocation>
</comment>
<comment type="miscellaneous">
    <text evidence="1">In the reaction, the free carboxyl group of octanoic acid is attached via an amide linkage to the epsilon-amino group of a specific lysine residue of lipoyl domains of lipoate-dependent enzymes.</text>
</comment>
<comment type="similarity">
    <text evidence="1">Belongs to the LipB family.</text>
</comment>
<name>LIPB_ACIC5</name>
<reference key="1">
    <citation type="journal article" date="2009" name="Appl. Environ. Microbiol.">
        <title>Three genomes from the phylum Acidobacteria provide insight into the lifestyles of these microorganisms in soils.</title>
        <authorList>
            <person name="Ward N.L."/>
            <person name="Challacombe J.F."/>
            <person name="Janssen P.H."/>
            <person name="Henrissat B."/>
            <person name="Coutinho P.M."/>
            <person name="Wu M."/>
            <person name="Xie G."/>
            <person name="Haft D.H."/>
            <person name="Sait M."/>
            <person name="Badger J."/>
            <person name="Barabote R.D."/>
            <person name="Bradley B."/>
            <person name="Brettin T.S."/>
            <person name="Brinkac L.M."/>
            <person name="Bruce D."/>
            <person name="Creasy T."/>
            <person name="Daugherty S.C."/>
            <person name="Davidsen T.M."/>
            <person name="DeBoy R.T."/>
            <person name="Detter J.C."/>
            <person name="Dodson R.J."/>
            <person name="Durkin A.S."/>
            <person name="Ganapathy A."/>
            <person name="Gwinn-Giglio M."/>
            <person name="Han C.S."/>
            <person name="Khouri H."/>
            <person name="Kiss H."/>
            <person name="Kothari S.P."/>
            <person name="Madupu R."/>
            <person name="Nelson K.E."/>
            <person name="Nelson W.C."/>
            <person name="Paulsen I."/>
            <person name="Penn K."/>
            <person name="Ren Q."/>
            <person name="Rosovitz M.J."/>
            <person name="Selengut J.D."/>
            <person name="Shrivastava S."/>
            <person name="Sullivan S.A."/>
            <person name="Tapia R."/>
            <person name="Thompson L.S."/>
            <person name="Watkins K.L."/>
            <person name="Yang Q."/>
            <person name="Yu C."/>
            <person name="Zafar N."/>
            <person name="Zhou L."/>
            <person name="Kuske C.R."/>
        </authorList>
    </citation>
    <scope>NUCLEOTIDE SEQUENCE [LARGE SCALE GENOMIC DNA]</scope>
    <source>
        <strain>ATCC 51196 / DSM 11244 / BCRC 80197 / JCM 7670 / NBRC 15755 / NCIMB 13165 / 161</strain>
    </source>
</reference>
<evidence type="ECO:0000255" key="1">
    <source>
        <dbReference type="HAMAP-Rule" id="MF_00013"/>
    </source>
</evidence>
<evidence type="ECO:0000255" key="2">
    <source>
        <dbReference type="PROSITE-ProRule" id="PRU01067"/>
    </source>
</evidence>
<sequence length="246" mass="27046">MVLNLLHLGRIGYAQGLELQRQLVEARHSGRIGNTLLLLEHPPVLTLGRNSERKNVLASDEFLAYRGVEIHEVNRGGDVTYHGPGQLVGYPILDLRSFAESGERGRLGAVEYVRWVEEALIRTCADFGVQTQRVAGRTGVWTLPGGSVEEKKIAAIGVHISRGITSHGFALNVTTDLRDFDLIVPCGISDRKVTSLELEVIDEPALTMEKVIHSAARQFGRVFGHQVLWLESPGDLLPELATLTQS</sequence>
<feature type="chain" id="PRO_1000116535" description="Octanoyltransferase">
    <location>
        <begin position="1"/>
        <end position="246"/>
    </location>
</feature>
<feature type="domain" description="BPL/LPL catalytic" evidence="2">
    <location>
        <begin position="30"/>
        <end position="227"/>
    </location>
</feature>
<feature type="active site" description="Acyl-thioester intermediate" evidence="1">
    <location>
        <position position="186"/>
    </location>
</feature>
<feature type="binding site" evidence="1">
    <location>
        <begin position="75"/>
        <end position="82"/>
    </location>
    <ligand>
        <name>substrate</name>
    </ligand>
</feature>
<feature type="binding site" evidence="1">
    <location>
        <begin position="155"/>
        <end position="157"/>
    </location>
    <ligand>
        <name>substrate</name>
    </ligand>
</feature>
<feature type="binding site" evidence="1">
    <location>
        <begin position="168"/>
        <end position="170"/>
    </location>
    <ligand>
        <name>substrate</name>
    </ligand>
</feature>
<feature type="site" description="Lowers pKa of active site Cys" evidence="1">
    <location>
        <position position="152"/>
    </location>
</feature>
<dbReference type="EC" id="2.3.1.181" evidence="1"/>
<dbReference type="EMBL" id="CP001472">
    <property type="protein sequence ID" value="ACO33016.1"/>
    <property type="molecule type" value="Genomic_DNA"/>
</dbReference>
<dbReference type="RefSeq" id="WP_015897917.1">
    <property type="nucleotide sequence ID" value="NC_012483.1"/>
</dbReference>
<dbReference type="SMR" id="C1F3S1"/>
<dbReference type="FunCoup" id="C1F3S1">
    <property type="interactions" value="326"/>
</dbReference>
<dbReference type="STRING" id="240015.ACP_2861"/>
<dbReference type="KEGG" id="aca:ACP_2861"/>
<dbReference type="eggNOG" id="COG0321">
    <property type="taxonomic scope" value="Bacteria"/>
</dbReference>
<dbReference type="HOGENOM" id="CLU_035168_1_1_0"/>
<dbReference type="InParanoid" id="C1F3S1"/>
<dbReference type="OrthoDB" id="9787061at2"/>
<dbReference type="UniPathway" id="UPA00538">
    <property type="reaction ID" value="UER00592"/>
</dbReference>
<dbReference type="Proteomes" id="UP000002207">
    <property type="component" value="Chromosome"/>
</dbReference>
<dbReference type="GO" id="GO:0005737">
    <property type="term" value="C:cytoplasm"/>
    <property type="evidence" value="ECO:0007669"/>
    <property type="project" value="UniProtKB-SubCell"/>
</dbReference>
<dbReference type="GO" id="GO:0033819">
    <property type="term" value="F:lipoyl(octanoyl) transferase activity"/>
    <property type="evidence" value="ECO:0007669"/>
    <property type="project" value="UniProtKB-EC"/>
</dbReference>
<dbReference type="GO" id="GO:0036211">
    <property type="term" value="P:protein modification process"/>
    <property type="evidence" value="ECO:0007669"/>
    <property type="project" value="InterPro"/>
</dbReference>
<dbReference type="CDD" id="cd16444">
    <property type="entry name" value="LipB"/>
    <property type="match status" value="1"/>
</dbReference>
<dbReference type="Gene3D" id="3.30.930.10">
    <property type="entry name" value="Bira Bifunctional Protein, Domain 2"/>
    <property type="match status" value="1"/>
</dbReference>
<dbReference type="HAMAP" id="MF_00013">
    <property type="entry name" value="LipB"/>
    <property type="match status" value="1"/>
</dbReference>
<dbReference type="InterPro" id="IPR045864">
    <property type="entry name" value="aa-tRNA-synth_II/BPL/LPL"/>
</dbReference>
<dbReference type="InterPro" id="IPR004143">
    <property type="entry name" value="BPL_LPL_catalytic"/>
</dbReference>
<dbReference type="InterPro" id="IPR000544">
    <property type="entry name" value="Octanoyltransferase"/>
</dbReference>
<dbReference type="InterPro" id="IPR020605">
    <property type="entry name" value="Octanoyltransferase_CS"/>
</dbReference>
<dbReference type="NCBIfam" id="TIGR00214">
    <property type="entry name" value="lipB"/>
    <property type="match status" value="1"/>
</dbReference>
<dbReference type="NCBIfam" id="NF010925">
    <property type="entry name" value="PRK14345.1"/>
    <property type="match status" value="1"/>
</dbReference>
<dbReference type="PANTHER" id="PTHR10993:SF7">
    <property type="entry name" value="LIPOYLTRANSFERASE 2, MITOCHONDRIAL-RELATED"/>
    <property type="match status" value="1"/>
</dbReference>
<dbReference type="PANTHER" id="PTHR10993">
    <property type="entry name" value="OCTANOYLTRANSFERASE"/>
    <property type="match status" value="1"/>
</dbReference>
<dbReference type="Pfam" id="PF21948">
    <property type="entry name" value="LplA-B_cat"/>
    <property type="match status" value="1"/>
</dbReference>
<dbReference type="PIRSF" id="PIRSF016262">
    <property type="entry name" value="LPLase"/>
    <property type="match status" value="1"/>
</dbReference>
<dbReference type="SUPFAM" id="SSF55681">
    <property type="entry name" value="Class II aaRS and biotin synthetases"/>
    <property type="match status" value="1"/>
</dbReference>
<dbReference type="PROSITE" id="PS51733">
    <property type="entry name" value="BPL_LPL_CATALYTIC"/>
    <property type="match status" value="1"/>
</dbReference>
<dbReference type="PROSITE" id="PS01313">
    <property type="entry name" value="LIPB"/>
    <property type="match status" value="1"/>
</dbReference>
<organism>
    <name type="scientific">Acidobacterium capsulatum (strain ATCC 51196 / DSM 11244 / BCRC 80197 / JCM 7670 / NBRC 15755 / NCIMB 13165 / 161)</name>
    <dbReference type="NCBI Taxonomy" id="240015"/>
    <lineage>
        <taxon>Bacteria</taxon>
        <taxon>Pseudomonadati</taxon>
        <taxon>Acidobacteriota</taxon>
        <taxon>Terriglobia</taxon>
        <taxon>Terriglobales</taxon>
        <taxon>Acidobacteriaceae</taxon>
        <taxon>Acidobacterium</taxon>
    </lineage>
</organism>
<accession>C1F3S1</accession>